<accession>Q0SMV7</accession>
<accession>G0IQA2</accession>
<reference key="1">
    <citation type="journal article" date="2006" name="BMC Genomics">
        <title>Comparative genome analysis: selection pressure on the Borrelia vls cassettes is essential for infectivity.</title>
        <authorList>
            <person name="Gloeckner G."/>
            <person name="Schulte-Spechtel U."/>
            <person name="Schilhabel M."/>
            <person name="Felder M."/>
            <person name="Suehnel J."/>
            <person name="Wilske B."/>
            <person name="Platzer M."/>
        </authorList>
    </citation>
    <scope>NUCLEOTIDE SEQUENCE [LARGE SCALE GENOMIC DNA]</scope>
    <source>
        <strain>PKo</strain>
    </source>
</reference>
<reference key="2">
    <citation type="journal article" date="2011" name="J. Bacteriol.">
        <title>Whole-genome sequences of two Borrelia afzelii and two Borrelia garinii Lyme disease agent isolates.</title>
        <authorList>
            <person name="Casjens S.R."/>
            <person name="Mongodin E.F."/>
            <person name="Qiu W.G."/>
            <person name="Dunn J.J."/>
            <person name="Luft B.J."/>
            <person name="Fraser-Liggett C.M."/>
            <person name="Schutzer S.E."/>
        </authorList>
    </citation>
    <scope>NUCLEOTIDE SEQUENCE [LARGE SCALE GENOMIC DNA]</scope>
    <source>
        <strain>PKo</strain>
    </source>
</reference>
<comment type="function">
    <text evidence="1">DNA ligase that catalyzes the formation of phosphodiester linkages between 5'-phosphoryl and 3'-hydroxyl groups in double-stranded DNA using NAD as a coenzyme and as the energy source for the reaction. It is essential for DNA replication and repair of damaged DNA.</text>
</comment>
<comment type="catalytic activity">
    <reaction evidence="1">
        <text>NAD(+) + (deoxyribonucleotide)n-3'-hydroxyl + 5'-phospho-(deoxyribonucleotide)m = (deoxyribonucleotide)n+m + AMP + beta-nicotinamide D-nucleotide.</text>
        <dbReference type="EC" id="6.5.1.2"/>
    </reaction>
</comment>
<comment type="cofactor">
    <cofactor evidence="1">
        <name>Mg(2+)</name>
        <dbReference type="ChEBI" id="CHEBI:18420"/>
    </cofactor>
    <cofactor evidence="1">
        <name>Mn(2+)</name>
        <dbReference type="ChEBI" id="CHEBI:29035"/>
    </cofactor>
</comment>
<comment type="similarity">
    <text evidence="1">Belongs to the NAD-dependent DNA ligase family. LigA subfamily.</text>
</comment>
<keyword id="KW-0227">DNA damage</keyword>
<keyword id="KW-0234">DNA repair</keyword>
<keyword id="KW-0235">DNA replication</keyword>
<keyword id="KW-0436">Ligase</keyword>
<keyword id="KW-0460">Magnesium</keyword>
<keyword id="KW-0464">Manganese</keyword>
<keyword id="KW-0479">Metal-binding</keyword>
<keyword id="KW-0520">NAD</keyword>
<keyword id="KW-0862">Zinc</keyword>
<protein>
    <recommendedName>
        <fullName evidence="1">DNA ligase</fullName>
        <ecNumber evidence="1">6.5.1.2</ecNumber>
    </recommendedName>
    <alternativeName>
        <fullName evidence="1">Polydeoxyribonucleotide synthase [NAD(+)]</fullName>
    </alternativeName>
</protein>
<name>DNLJ_BORAP</name>
<proteinExistence type="inferred from homology"/>
<sequence length="660" mass="75435">MSSKIQQEIADLKKLIRKWDKEYYVDSLPSVEDFVYDKHILRLQELESKCPEYKTLDSPTLKFGSDLLNDFKEVEHSVPVLSLDKVYNLDLLKSWIDKIDFSNSFNISVEPKIDGCSIVLYYKDGILEKALTRGNGKFGNDVTKNIRTIRHVPLFLGEKVDLVLRGEVYITKENFLKINKFLEKPYTNSRNLASGILRRVDSREVANFPLNIFIYDFLNAGLDFKTNNLAIEKLKKLGFKVNPLIRFFDQKSSIKEVLNYIADITKKRNSFEYEIDGVVLKVSDFALREKLGYTLHHPKWAMAYKFEALSGFSKVNSIVVQVGRSGKITPVANIDKVFVSGAFITNATLHNQDYITSINLNVGDIVKVSRRGDVIPAVEMVINKFSTGFFKVPDKCPSCKTVVVKEGAHFFCTNNNCPSVAVERIKYFCSKNCMDIEGFSDKTISFLFEKKFISSEIDLYTFNFYKLLKFKGFKDRKINNLINSIEASKKKPFSKLLLSIGIKELGENTIRLLFLNNLNSFSKLFRLCQDRDFAFLTLLKIKGIGEKIALNIIDAFNNSIMINKFKVFENLGFKMEERILIDDENKLLVGKKFCITGSFNGYSRPIVIDKLENKGAIFKTCVTKGLDFLVVGEKAGTKLKKALNLNVKIMSFEDIKSYLD</sequence>
<feature type="chain" id="PRO_0000313147" description="DNA ligase">
    <location>
        <begin position="1"/>
        <end position="660"/>
    </location>
</feature>
<feature type="domain" description="BRCT" evidence="1">
    <location>
        <begin position="583"/>
        <end position="660"/>
    </location>
</feature>
<feature type="active site" description="N6-AMP-lysine intermediate" evidence="1">
    <location>
        <position position="112"/>
    </location>
</feature>
<feature type="binding site" evidence="1">
    <location>
        <begin position="33"/>
        <end position="37"/>
    </location>
    <ligand>
        <name>NAD(+)</name>
        <dbReference type="ChEBI" id="CHEBI:57540"/>
    </ligand>
</feature>
<feature type="binding site" evidence="1">
    <location>
        <begin position="82"/>
        <end position="83"/>
    </location>
    <ligand>
        <name>NAD(+)</name>
        <dbReference type="ChEBI" id="CHEBI:57540"/>
    </ligand>
</feature>
<feature type="binding site" evidence="1">
    <location>
        <position position="110"/>
    </location>
    <ligand>
        <name>NAD(+)</name>
        <dbReference type="ChEBI" id="CHEBI:57540"/>
    </ligand>
</feature>
<feature type="binding site" evidence="1">
    <location>
        <position position="133"/>
    </location>
    <ligand>
        <name>NAD(+)</name>
        <dbReference type="ChEBI" id="CHEBI:57540"/>
    </ligand>
</feature>
<feature type="binding site" evidence="1">
    <location>
        <position position="167"/>
    </location>
    <ligand>
        <name>NAD(+)</name>
        <dbReference type="ChEBI" id="CHEBI:57540"/>
    </ligand>
</feature>
<feature type="binding site" evidence="1">
    <location>
        <position position="281"/>
    </location>
    <ligand>
        <name>NAD(+)</name>
        <dbReference type="ChEBI" id="CHEBI:57540"/>
    </ligand>
</feature>
<feature type="binding site" evidence="1">
    <location>
        <position position="305"/>
    </location>
    <ligand>
        <name>NAD(+)</name>
        <dbReference type="ChEBI" id="CHEBI:57540"/>
    </ligand>
</feature>
<feature type="binding site" evidence="1">
    <location>
        <position position="396"/>
    </location>
    <ligand>
        <name>Zn(2+)</name>
        <dbReference type="ChEBI" id="CHEBI:29105"/>
    </ligand>
</feature>
<feature type="binding site" evidence="1">
    <location>
        <position position="399"/>
    </location>
    <ligand>
        <name>Zn(2+)</name>
        <dbReference type="ChEBI" id="CHEBI:29105"/>
    </ligand>
</feature>
<feature type="binding site" evidence="1">
    <location>
        <position position="412"/>
    </location>
    <ligand>
        <name>Zn(2+)</name>
        <dbReference type="ChEBI" id="CHEBI:29105"/>
    </ligand>
</feature>
<feature type="binding site" evidence="1">
    <location>
        <position position="417"/>
    </location>
    <ligand>
        <name>Zn(2+)</name>
        <dbReference type="ChEBI" id="CHEBI:29105"/>
    </ligand>
</feature>
<dbReference type="EC" id="6.5.1.2" evidence="1"/>
<dbReference type="EMBL" id="CP000395">
    <property type="protein sequence ID" value="ABH01821.1"/>
    <property type="molecule type" value="Genomic_DNA"/>
</dbReference>
<dbReference type="EMBL" id="CP002933">
    <property type="protein sequence ID" value="AEL69772.1"/>
    <property type="molecule type" value="Genomic_DNA"/>
</dbReference>
<dbReference type="RefSeq" id="WP_011601085.1">
    <property type="nucleotide sequence ID" value="NC_008277.1"/>
</dbReference>
<dbReference type="SMR" id="Q0SMV7"/>
<dbReference type="STRING" id="29518.BLA32_01510"/>
<dbReference type="KEGG" id="baf:BAPKO_0581"/>
<dbReference type="KEGG" id="bafz:BafPKo_0567"/>
<dbReference type="PATRIC" id="fig|390236.22.peg.545"/>
<dbReference type="eggNOG" id="COG0272">
    <property type="taxonomic scope" value="Bacteria"/>
</dbReference>
<dbReference type="HOGENOM" id="CLU_007764_2_1_12"/>
<dbReference type="OrthoDB" id="9759736at2"/>
<dbReference type="Proteomes" id="UP000005216">
    <property type="component" value="Chromosome"/>
</dbReference>
<dbReference type="GO" id="GO:0003677">
    <property type="term" value="F:DNA binding"/>
    <property type="evidence" value="ECO:0007669"/>
    <property type="project" value="InterPro"/>
</dbReference>
<dbReference type="GO" id="GO:0003911">
    <property type="term" value="F:DNA ligase (NAD+) activity"/>
    <property type="evidence" value="ECO:0007669"/>
    <property type="project" value="UniProtKB-UniRule"/>
</dbReference>
<dbReference type="GO" id="GO:0046872">
    <property type="term" value="F:metal ion binding"/>
    <property type="evidence" value="ECO:0007669"/>
    <property type="project" value="UniProtKB-KW"/>
</dbReference>
<dbReference type="GO" id="GO:0006281">
    <property type="term" value="P:DNA repair"/>
    <property type="evidence" value="ECO:0007669"/>
    <property type="project" value="UniProtKB-KW"/>
</dbReference>
<dbReference type="GO" id="GO:0006260">
    <property type="term" value="P:DNA replication"/>
    <property type="evidence" value="ECO:0007669"/>
    <property type="project" value="UniProtKB-KW"/>
</dbReference>
<dbReference type="CDD" id="cd17748">
    <property type="entry name" value="BRCT_DNA_ligase_like"/>
    <property type="match status" value="1"/>
</dbReference>
<dbReference type="CDD" id="cd00114">
    <property type="entry name" value="LIGANc"/>
    <property type="match status" value="1"/>
</dbReference>
<dbReference type="Gene3D" id="1.10.150.20">
    <property type="entry name" value="5' to 3' exonuclease, C-terminal subdomain"/>
    <property type="match status" value="2"/>
</dbReference>
<dbReference type="Gene3D" id="3.40.50.10190">
    <property type="entry name" value="BRCT domain"/>
    <property type="match status" value="1"/>
</dbReference>
<dbReference type="Gene3D" id="3.30.470.30">
    <property type="entry name" value="DNA ligase/mRNA capping enzyme"/>
    <property type="match status" value="1"/>
</dbReference>
<dbReference type="Gene3D" id="1.10.287.610">
    <property type="entry name" value="Helix hairpin bin"/>
    <property type="match status" value="1"/>
</dbReference>
<dbReference type="Gene3D" id="2.40.50.140">
    <property type="entry name" value="Nucleic acid-binding proteins"/>
    <property type="match status" value="1"/>
</dbReference>
<dbReference type="HAMAP" id="MF_01588">
    <property type="entry name" value="DNA_ligase_A"/>
    <property type="match status" value="1"/>
</dbReference>
<dbReference type="InterPro" id="IPR001357">
    <property type="entry name" value="BRCT_dom"/>
</dbReference>
<dbReference type="InterPro" id="IPR036420">
    <property type="entry name" value="BRCT_dom_sf"/>
</dbReference>
<dbReference type="InterPro" id="IPR001679">
    <property type="entry name" value="DNA_ligase"/>
</dbReference>
<dbReference type="InterPro" id="IPR013839">
    <property type="entry name" value="DNAligase_adenylation"/>
</dbReference>
<dbReference type="InterPro" id="IPR013840">
    <property type="entry name" value="DNAligase_N"/>
</dbReference>
<dbReference type="InterPro" id="IPR003583">
    <property type="entry name" value="Hlx-hairpin-Hlx_DNA-bd_motif"/>
</dbReference>
<dbReference type="InterPro" id="IPR012340">
    <property type="entry name" value="NA-bd_OB-fold"/>
</dbReference>
<dbReference type="InterPro" id="IPR004150">
    <property type="entry name" value="NAD_DNA_ligase_OB"/>
</dbReference>
<dbReference type="InterPro" id="IPR010994">
    <property type="entry name" value="RuvA_2-like"/>
</dbReference>
<dbReference type="NCBIfam" id="TIGR00575">
    <property type="entry name" value="dnlj"/>
    <property type="match status" value="1"/>
</dbReference>
<dbReference type="NCBIfam" id="NF005932">
    <property type="entry name" value="PRK07956.1"/>
    <property type="match status" value="1"/>
</dbReference>
<dbReference type="NCBIfam" id="NF010930">
    <property type="entry name" value="PRK14350.1"/>
    <property type="match status" value="1"/>
</dbReference>
<dbReference type="Pfam" id="PF00533">
    <property type="entry name" value="BRCT"/>
    <property type="match status" value="1"/>
</dbReference>
<dbReference type="Pfam" id="PF01653">
    <property type="entry name" value="DNA_ligase_aden"/>
    <property type="match status" value="1"/>
</dbReference>
<dbReference type="Pfam" id="PF03120">
    <property type="entry name" value="DNA_ligase_OB"/>
    <property type="match status" value="1"/>
</dbReference>
<dbReference type="PIRSF" id="PIRSF001604">
    <property type="entry name" value="LigA"/>
    <property type="match status" value="1"/>
</dbReference>
<dbReference type="SMART" id="SM00292">
    <property type="entry name" value="BRCT"/>
    <property type="match status" value="1"/>
</dbReference>
<dbReference type="SMART" id="SM00278">
    <property type="entry name" value="HhH1"/>
    <property type="match status" value="3"/>
</dbReference>
<dbReference type="SMART" id="SM00532">
    <property type="entry name" value="LIGANc"/>
    <property type="match status" value="1"/>
</dbReference>
<dbReference type="SUPFAM" id="SSF52113">
    <property type="entry name" value="BRCT domain"/>
    <property type="match status" value="1"/>
</dbReference>
<dbReference type="SUPFAM" id="SSF56091">
    <property type="entry name" value="DNA ligase/mRNA capping enzyme, catalytic domain"/>
    <property type="match status" value="1"/>
</dbReference>
<dbReference type="SUPFAM" id="SSF50249">
    <property type="entry name" value="Nucleic acid-binding proteins"/>
    <property type="match status" value="1"/>
</dbReference>
<dbReference type="SUPFAM" id="SSF47781">
    <property type="entry name" value="RuvA domain 2-like"/>
    <property type="match status" value="1"/>
</dbReference>
<dbReference type="PROSITE" id="PS50172">
    <property type="entry name" value="BRCT"/>
    <property type="match status" value="1"/>
</dbReference>
<evidence type="ECO:0000255" key="1">
    <source>
        <dbReference type="HAMAP-Rule" id="MF_01588"/>
    </source>
</evidence>
<organism>
    <name type="scientific">Borreliella afzelii (strain PKo)</name>
    <name type="common">Borrelia afzelii</name>
    <dbReference type="NCBI Taxonomy" id="390236"/>
    <lineage>
        <taxon>Bacteria</taxon>
        <taxon>Pseudomonadati</taxon>
        <taxon>Spirochaetota</taxon>
        <taxon>Spirochaetia</taxon>
        <taxon>Spirochaetales</taxon>
        <taxon>Borreliaceae</taxon>
        <taxon>Borreliella</taxon>
    </lineage>
</organism>
<gene>
    <name evidence="1" type="primary">ligA</name>
    <name type="ordered locus">BAPKO_0581</name>
    <name type="ordered locus">BafPKo_0567</name>
</gene>